<comment type="function">
    <text evidence="1">Involved in urease metallocenter assembly. Binds nickel. Probably functions as a nickel donor during metallocenter assembly.</text>
</comment>
<comment type="subcellular location">
    <subcellularLocation>
        <location evidence="1">Cytoplasm</location>
    </subcellularLocation>
</comment>
<comment type="similarity">
    <text evidence="1">Belongs to the UreE family.</text>
</comment>
<comment type="sequence caution" evidence="3">
    <conflict type="erroneous initiation">
        <sequence resource="EMBL-CDS" id="BAJ67708"/>
    </conflict>
    <text>Truncated N-terminus.</text>
</comment>
<accession>B7GT18</accession>
<accession>E8MMX0</accession>
<keyword id="KW-0143">Chaperone</keyword>
<keyword id="KW-0963">Cytoplasm</keyword>
<keyword id="KW-0533">Nickel</keyword>
<reference key="1">
    <citation type="journal article" date="2008" name="Proc. Natl. Acad. Sci. U.S.A.">
        <title>The genome sequence of Bifidobacterium longum subsp. infantis reveals adaptations for milk utilization within the infant microbiome.</title>
        <authorList>
            <person name="Sela D.A."/>
            <person name="Chapman J."/>
            <person name="Adeuya A."/>
            <person name="Kim J.H."/>
            <person name="Chen F."/>
            <person name="Whitehead T.R."/>
            <person name="Lapidus A."/>
            <person name="Rokhsar D.S."/>
            <person name="Lebrilla C.B."/>
            <person name="German J.B."/>
            <person name="Price N.P."/>
            <person name="Richardson P.M."/>
            <person name="Mills D.A."/>
        </authorList>
    </citation>
    <scope>NUCLEOTIDE SEQUENCE [LARGE SCALE GENOMIC DNA]</scope>
    <source>
        <strain>ATCC 15697 / DSM 20088 / JCM 1222 / NCTC 11817 / S12</strain>
    </source>
</reference>
<reference key="2">
    <citation type="journal article" date="2011" name="Nature">
        <title>Bifidobacteria can protect from enteropathogenic infection through production of acetate.</title>
        <authorList>
            <person name="Fukuda S."/>
            <person name="Toh H."/>
            <person name="Hase K."/>
            <person name="Oshima K."/>
            <person name="Nakanishi Y."/>
            <person name="Yoshimura K."/>
            <person name="Tobe T."/>
            <person name="Clarke J.M."/>
            <person name="Topping D.L."/>
            <person name="Suzuki T."/>
            <person name="Taylor T.D."/>
            <person name="Itoh K."/>
            <person name="Kikuchi J."/>
            <person name="Morita H."/>
            <person name="Hattori M."/>
            <person name="Ohno H."/>
        </authorList>
    </citation>
    <scope>NUCLEOTIDE SEQUENCE [LARGE SCALE GENOMIC DNA]</scope>
    <source>
        <strain>ATCC 15697 / DSM 20088 / JCM 1222 / NCTC 11817 / S12</strain>
    </source>
</reference>
<name>UREE_BIFLS</name>
<evidence type="ECO:0000255" key="1">
    <source>
        <dbReference type="HAMAP-Rule" id="MF_00822"/>
    </source>
</evidence>
<evidence type="ECO:0000256" key="2">
    <source>
        <dbReference type="SAM" id="MobiDB-lite"/>
    </source>
</evidence>
<evidence type="ECO:0000305" key="3"/>
<proteinExistence type="inferred from homology"/>
<sequence>MQTKGGSRLMIANRISGNIISDTFSDGKLNVPIEFEWFEADKKRMRKVAADGTEFGVAVGATIADGDVLAETADKRYFARIRTAQLIEIPVHSMKEMGRLCFELGNRHLSLKVEDDRVLVPYDHPTMEYTKKIGFDPRVIEGGFDGFLIVKAHAGAGTIVPGTNKTTGDLAEEEQETERHEPHAHAIGEHHHEKSEYEVNGVLHRADGMHSHDHGQTWHMH</sequence>
<gene>
    <name evidence="1" type="primary">ureE</name>
    <name type="ordered locus">Blon_0112</name>
    <name type="ordered locus">BLIJ_0113</name>
</gene>
<feature type="chain" id="PRO_1000148715" description="Urease accessory protein UreE">
    <location>
        <begin position="1"/>
        <end position="221"/>
    </location>
</feature>
<feature type="region of interest" description="Disordered" evidence="2">
    <location>
        <begin position="160"/>
        <end position="194"/>
    </location>
</feature>
<feature type="compositionally biased region" description="Basic and acidic residues" evidence="2">
    <location>
        <begin position="177"/>
        <end position="194"/>
    </location>
</feature>
<organism>
    <name type="scientific">Bifidobacterium longum subsp. infantis (strain ATCC 15697 / DSM 20088 / JCM 1222 / NCTC 11817 / S12)</name>
    <dbReference type="NCBI Taxonomy" id="391904"/>
    <lineage>
        <taxon>Bacteria</taxon>
        <taxon>Bacillati</taxon>
        <taxon>Actinomycetota</taxon>
        <taxon>Actinomycetes</taxon>
        <taxon>Bifidobacteriales</taxon>
        <taxon>Bifidobacteriaceae</taxon>
        <taxon>Bifidobacterium</taxon>
    </lineage>
</organism>
<protein>
    <recommendedName>
        <fullName evidence="1">Urease accessory protein UreE</fullName>
    </recommendedName>
</protein>
<dbReference type="EMBL" id="CP001095">
    <property type="protein sequence ID" value="ACJ51241.1"/>
    <property type="molecule type" value="Genomic_DNA"/>
</dbReference>
<dbReference type="EMBL" id="AP010889">
    <property type="protein sequence ID" value="BAJ67708.1"/>
    <property type="status" value="ALT_INIT"/>
    <property type="molecule type" value="Genomic_DNA"/>
</dbReference>
<dbReference type="SMR" id="B7GT18"/>
<dbReference type="KEGG" id="bln:Blon_0112"/>
<dbReference type="KEGG" id="blon:BLIJ_0113"/>
<dbReference type="PATRIC" id="fig|391904.8.peg.117"/>
<dbReference type="HOGENOM" id="CLU_1248634_0_0_11"/>
<dbReference type="Proteomes" id="UP000001360">
    <property type="component" value="Chromosome"/>
</dbReference>
<dbReference type="GO" id="GO:0005737">
    <property type="term" value="C:cytoplasm"/>
    <property type="evidence" value="ECO:0007669"/>
    <property type="project" value="UniProtKB-SubCell"/>
</dbReference>
<dbReference type="GO" id="GO:0016151">
    <property type="term" value="F:nickel cation binding"/>
    <property type="evidence" value="ECO:0007669"/>
    <property type="project" value="UniProtKB-UniRule"/>
</dbReference>
<dbReference type="GO" id="GO:0051082">
    <property type="term" value="F:unfolded protein binding"/>
    <property type="evidence" value="ECO:0007669"/>
    <property type="project" value="UniProtKB-UniRule"/>
</dbReference>
<dbReference type="GO" id="GO:0006457">
    <property type="term" value="P:protein folding"/>
    <property type="evidence" value="ECO:0007669"/>
    <property type="project" value="InterPro"/>
</dbReference>
<dbReference type="GO" id="GO:0065003">
    <property type="term" value="P:protein-containing complex assembly"/>
    <property type="evidence" value="ECO:0007669"/>
    <property type="project" value="InterPro"/>
</dbReference>
<dbReference type="GO" id="GO:0019627">
    <property type="term" value="P:urea metabolic process"/>
    <property type="evidence" value="ECO:0007669"/>
    <property type="project" value="InterPro"/>
</dbReference>
<dbReference type="Gene3D" id="2.60.260.20">
    <property type="entry name" value="Urease metallochaperone UreE, N-terminal domain"/>
    <property type="match status" value="1"/>
</dbReference>
<dbReference type="Gene3D" id="3.30.70.790">
    <property type="entry name" value="UreE, C-terminal domain"/>
    <property type="match status" value="1"/>
</dbReference>
<dbReference type="HAMAP" id="MF_00822">
    <property type="entry name" value="UreE"/>
    <property type="match status" value="1"/>
</dbReference>
<dbReference type="InterPro" id="IPR012406">
    <property type="entry name" value="UreE"/>
</dbReference>
<dbReference type="InterPro" id="IPR007864">
    <property type="entry name" value="UreE_C_dom"/>
</dbReference>
<dbReference type="Pfam" id="PF05194">
    <property type="entry name" value="UreE_C"/>
    <property type="match status" value="1"/>
</dbReference>
<dbReference type="SUPFAM" id="SSF69737">
    <property type="entry name" value="Urease metallochaperone UreE, C-terminal domain"/>
    <property type="match status" value="1"/>
</dbReference>